<organism>
    <name type="scientific">Phytophthora infestans (strain T30-4)</name>
    <name type="common">Potato late blight agent</name>
    <dbReference type="NCBI Taxonomy" id="403677"/>
    <lineage>
        <taxon>Eukaryota</taxon>
        <taxon>Sar</taxon>
        <taxon>Stramenopiles</taxon>
        <taxon>Oomycota</taxon>
        <taxon>Peronosporales</taxon>
        <taxon>Peronosporaceae</taxon>
        <taxon>Phytophthora</taxon>
    </lineage>
</organism>
<dbReference type="EMBL" id="DS028132">
    <property type="protein sequence ID" value="EEY55635.1"/>
    <property type="molecule type" value="Genomic_DNA"/>
</dbReference>
<dbReference type="RefSeq" id="XP_002903211.1">
    <property type="nucleotide sequence ID" value="XM_002903165.1"/>
</dbReference>
<dbReference type="SMR" id="D0NCC1"/>
<dbReference type="STRING" id="403677.D0NCC1"/>
<dbReference type="EnsemblProtists" id="PITG_09585T0">
    <property type="protein sequence ID" value="PITG_09585T0"/>
    <property type="gene ID" value="PITG_09585"/>
</dbReference>
<dbReference type="GeneID" id="9461552"/>
<dbReference type="KEGG" id="pif:PITG_09585"/>
<dbReference type="VEuPathDB" id="FungiDB:PITG_09585"/>
<dbReference type="eggNOG" id="ENOG502QWHW">
    <property type="taxonomic scope" value="Eukaryota"/>
</dbReference>
<dbReference type="HOGENOM" id="CLU_751192_0_0_1"/>
<dbReference type="InParanoid" id="D0NCC1"/>
<dbReference type="OMA" id="ENSMGYA"/>
<dbReference type="OrthoDB" id="626167at2759"/>
<dbReference type="PHI-base" id="PHI:4203"/>
<dbReference type="Proteomes" id="UP000006643">
    <property type="component" value="Partially assembled WGS sequence"/>
</dbReference>
<dbReference type="GO" id="GO:0005576">
    <property type="term" value="C:extracellular region"/>
    <property type="evidence" value="ECO:0007669"/>
    <property type="project" value="UniProtKB-SubCell"/>
</dbReference>
<dbReference type="GO" id="GO:0030430">
    <property type="term" value="C:host cell cytoplasm"/>
    <property type="evidence" value="ECO:0007669"/>
    <property type="project" value="UniProtKB-SubCell"/>
</dbReference>
<dbReference type="GO" id="GO:0042025">
    <property type="term" value="C:host cell nucleus"/>
    <property type="evidence" value="ECO:0007669"/>
    <property type="project" value="UniProtKB-SubCell"/>
</dbReference>
<dbReference type="Gene3D" id="1.25.40.10">
    <property type="entry name" value="Tetratricopeptide repeat domain"/>
    <property type="match status" value="2"/>
</dbReference>
<dbReference type="InterPro" id="IPR011990">
    <property type="entry name" value="TPR-like_helical_dom_sf"/>
</dbReference>
<dbReference type="InterPro" id="IPR019734">
    <property type="entry name" value="TPR_rpt"/>
</dbReference>
<dbReference type="PANTHER" id="PTHR45641">
    <property type="entry name" value="TETRATRICOPEPTIDE REPEAT PROTEIN (AFU_ORTHOLOGUE AFUA_6G03870)"/>
    <property type="match status" value="1"/>
</dbReference>
<dbReference type="Pfam" id="PF13374">
    <property type="entry name" value="TPR_10"/>
    <property type="match status" value="1"/>
</dbReference>
<dbReference type="Pfam" id="PF13424">
    <property type="entry name" value="TPR_12"/>
    <property type="match status" value="1"/>
</dbReference>
<dbReference type="SMART" id="SM00028">
    <property type="entry name" value="TPR"/>
    <property type="match status" value="4"/>
</dbReference>
<dbReference type="SUPFAM" id="SSF48452">
    <property type="entry name" value="TPR-like"/>
    <property type="match status" value="2"/>
</dbReference>
<dbReference type="PROSITE" id="PS50293">
    <property type="entry name" value="TPR_REGION"/>
    <property type="match status" value="2"/>
</dbReference>
<reference key="1">
    <citation type="journal article" date="2009" name="Nature">
        <title>Genome sequence and analysis of the Irish potato famine pathogen Phytophthora infestans.</title>
        <authorList>
            <consortium name="The Broad Institute Genome Sequencing Platform"/>
            <person name="Haas B.J."/>
            <person name="Kamoun S."/>
            <person name="Zody M.C."/>
            <person name="Jiang R.H."/>
            <person name="Handsaker R.E."/>
            <person name="Cano L.M."/>
            <person name="Grabherr M."/>
            <person name="Kodira C.D."/>
            <person name="Raffaele S."/>
            <person name="Torto-Alalibo T."/>
            <person name="Bozkurt T.O."/>
            <person name="Ah-Fong A.M."/>
            <person name="Alvarado L."/>
            <person name="Anderson V.L."/>
            <person name="Armstrong M.R."/>
            <person name="Avrova A."/>
            <person name="Baxter L."/>
            <person name="Beynon J."/>
            <person name="Boevink P.C."/>
            <person name="Bollmann S.R."/>
            <person name="Bos J.I."/>
            <person name="Bulone V."/>
            <person name="Cai G."/>
            <person name="Cakir C."/>
            <person name="Carrington J.C."/>
            <person name="Chawner M."/>
            <person name="Conti L."/>
            <person name="Costanzo S."/>
            <person name="Ewan R."/>
            <person name="Fahlgren N."/>
            <person name="Fischbach M.A."/>
            <person name="Fugelstad J."/>
            <person name="Gilroy E.M."/>
            <person name="Gnerre S."/>
            <person name="Green P.J."/>
            <person name="Grenville-Briggs L.J."/>
            <person name="Griffith J."/>
            <person name="Grunwald N.J."/>
            <person name="Horn K."/>
            <person name="Horner N.R."/>
            <person name="Hu C.H."/>
            <person name="Huitema E."/>
            <person name="Jeong D.H."/>
            <person name="Jones A.M."/>
            <person name="Jones J.D."/>
            <person name="Jones R.W."/>
            <person name="Karlsson E.K."/>
            <person name="Kunjeti S.G."/>
            <person name="Lamour K."/>
            <person name="Liu Z."/>
            <person name="Ma L."/>
            <person name="Maclean D."/>
            <person name="Chibucos M.C."/>
            <person name="McDonald H."/>
            <person name="McWalters J."/>
            <person name="Meijer H.J."/>
            <person name="Morgan W."/>
            <person name="Morris P.F."/>
            <person name="Munro C.A."/>
            <person name="O'Neill K."/>
            <person name="Ospina-Giraldo M."/>
            <person name="Pinzon A."/>
            <person name="Pritchard L."/>
            <person name="Ramsahoye B."/>
            <person name="Ren Q."/>
            <person name="Restrepo S."/>
            <person name="Roy S."/>
            <person name="Sadanandom A."/>
            <person name="Savidor A."/>
            <person name="Schornack S."/>
            <person name="Schwartz D.C."/>
            <person name="Schumann U.D."/>
            <person name="Schwessinger B."/>
            <person name="Seyer L."/>
            <person name="Sharpe T."/>
            <person name="Silvar C."/>
            <person name="Song J."/>
            <person name="Studholme D.J."/>
            <person name="Sykes S."/>
            <person name="Thines M."/>
            <person name="van de Vondervoort P.J."/>
            <person name="Phuntumart V."/>
            <person name="Wawra S."/>
            <person name="Weide R."/>
            <person name="Win J."/>
            <person name="Young C."/>
            <person name="Zhou S."/>
            <person name="Fry W."/>
            <person name="Meyers B.C."/>
            <person name="van West P."/>
            <person name="Ristaino J."/>
            <person name="Govers F."/>
            <person name="Birch P.R."/>
            <person name="Whisson S.C."/>
            <person name="Judelson H.S."/>
            <person name="Nusbaum C."/>
        </authorList>
    </citation>
    <scope>NUCLEOTIDE SEQUENCE [LARGE SCALE GENOMIC DNA]</scope>
    <source>
        <strain>T30-4</strain>
    </source>
</reference>
<reference key="2">
    <citation type="journal article" date="2014" name="PLoS Pathog.">
        <title>Functionally redundant RXLR effectors from Phytophthora infestans act at different steps to suppress early flg22-triggered immunity.</title>
        <authorList>
            <person name="Zheng X."/>
            <person name="McLellan H."/>
            <person name="Fraiture M."/>
            <person name="Liu X."/>
            <person name="Boevink P.C."/>
            <person name="Gilroy E.M."/>
            <person name="Chen Y."/>
            <person name="Kandel K."/>
            <person name="Sessa G."/>
            <person name="Birch P.R."/>
            <person name="Brunner F."/>
        </authorList>
    </citation>
    <scope>FUNCTION</scope>
    <scope>SUBCELLULAR LOCATION</scope>
</reference>
<evidence type="ECO:0000255" key="1"/>
<evidence type="ECO:0000255" key="2">
    <source>
        <dbReference type="PROSITE-ProRule" id="PRU00339"/>
    </source>
</evidence>
<evidence type="ECO:0000269" key="3">
    <source>
    </source>
</evidence>
<evidence type="ECO:0000303" key="4">
    <source>
    </source>
</evidence>
<evidence type="ECO:0000305" key="5"/>
<evidence type="ECO:0000305" key="6">
    <source>
    </source>
</evidence>
<sequence>MRVLRVTFLWALLLLVAFSASVYAAEDEPKTPESTSSANPRDNDPVIQEIRGLRNSGMKLNDAKDFKGAIAKLRGAITLLHDRVFGEGREAITDPSDISQDAALYAQILNDYGTVLIRAKQYDEAIEVLEDSVAMVEKIYGDSHPSLGLSLRSLADAYMAKEEYKMAIKKYKTLRKHVKKGLETTHEAYIEASLRIAEGYKKLGNTKKNLKVLKDAVEAQNGEINGLTTGIAELYMELSTAHVAVGEIDDALRAAEVASAIFRQRDGEDTLSFAFSLNALAGVKMRQKKVDEAIKLLEQAHRIAVQIYGEKDPITQASAKTLREVKEYKLDLQAQKDEL</sequence>
<proteinExistence type="inferred from homology"/>
<gene>
    <name evidence="4" type="primary">SFI4</name>
    <name type="ORF">PITG_09585</name>
</gene>
<protein>
    <recommendedName>
        <fullName evidence="4">RxLR effector protein SFI4</fullName>
    </recommendedName>
    <alternativeName>
        <fullName evidence="4">Suppressor of early Flg22-induced immune response 4</fullName>
    </alternativeName>
</protein>
<accession>D0NCC1</accession>
<keyword id="KW-1035">Host cytoplasm</keyword>
<keyword id="KW-1048">Host nucleus</keyword>
<keyword id="KW-1185">Reference proteome</keyword>
<keyword id="KW-0677">Repeat</keyword>
<keyword id="KW-0964">Secreted</keyword>
<keyword id="KW-0732">Signal</keyword>
<keyword id="KW-0802">TPR repeat</keyword>
<keyword id="KW-0843">Virulence</keyword>
<comment type="function">
    <text evidence="3">Effector that suppresses flg22-induced post-translational MAP kinase activation in tomato but not in Arabidopsis. The perception of highly conserved pathogen- or microbe-associated molecular patterns (PAMPs/MAMPs), such as flg22, triggers converging signaling pathways recruiting MAP kinase cascades and inducing transcriptional re-programming, yielding a generic antimicrobial response.</text>
</comment>
<comment type="subcellular location">
    <subcellularLocation>
        <location evidence="3">Secreted</location>
    </subcellularLocation>
    <subcellularLocation>
        <location evidence="3">Host nucleus</location>
    </subcellularLocation>
    <subcellularLocation>
        <location evidence="3">Host cytoplasm</location>
    </subcellularLocation>
</comment>
<comment type="domain">
    <text evidence="6">The RxLR-dEER motif acts to carry the protein into the host cell cytoplasm through binding to cell surface phosphatidylinositol-3-phosphate.</text>
</comment>
<comment type="similarity">
    <text evidence="5">Belongs to the RxLR effector family.</text>
</comment>
<feature type="signal peptide" evidence="1">
    <location>
        <begin position="1"/>
        <end position="24"/>
    </location>
</feature>
<feature type="chain" id="PRO_5003013215" description="RxLR effector protein SFI4">
    <location>
        <begin position="25"/>
        <end position="339"/>
    </location>
</feature>
<feature type="repeat" description="TPR 1" evidence="2">
    <location>
        <begin position="106"/>
        <end position="139"/>
    </location>
</feature>
<feature type="repeat" description="TPR 2" evidence="2">
    <location>
        <begin position="190"/>
        <end position="223"/>
    </location>
</feature>
<feature type="repeat" description="TPR 3" evidence="2">
    <location>
        <begin position="232"/>
        <end position="265"/>
    </location>
</feature>
<feature type="repeat" description="TPR 4" evidence="2">
    <location>
        <begin position="274"/>
        <end position="307"/>
    </location>
</feature>
<feature type="short sequence motif" description="RxLR-dEER" evidence="6">
    <location>
        <begin position="51"/>
        <end position="74"/>
    </location>
</feature>
<name>SFI4_PHYIT</name>